<organism evidence="10">
    <name type="scientific">Plasmodium falciparum (isolate NF54)</name>
    <dbReference type="NCBI Taxonomy" id="5843"/>
    <lineage>
        <taxon>Eukaryota</taxon>
        <taxon>Sar</taxon>
        <taxon>Alveolata</taxon>
        <taxon>Apicomplexa</taxon>
        <taxon>Aconoidasida</taxon>
        <taxon>Haemosporida</taxon>
        <taxon>Plasmodiidae</taxon>
        <taxon>Plasmodium</taxon>
        <taxon>Plasmodium (Laverania)</taxon>
    </lineage>
</organism>
<proteinExistence type="evidence at protein level"/>
<sequence length="679" mass="78305">MSDDDDKIYIYSDLFSKNFSDDEKDDSYEREKQVYSGSETQNAENEYSKLRAQNSTILNNYFDNDNIKNVENLKSNDPDQIDLILFPVNKNYYMNLFDGQLIENIHSIKLRKAGFYAIYVENNNNSKWDGIYFGLSRMQVELDYKLITKKNKDGGEYEKRNTSSYDNTESVQNTVGSEKEETENKNEETSNYNSNLNNEINKICKYNLDQTDILLDDSNSERRRNSKFKIKNTNYYDNLMLQNKYTNSILYDDDDDKNNTETYTCTFKTEDQIRVPSQKKKYIYLYNKYDNATLDLNVHTYMSLGMSILCKYSLLYCGKYNHIPRDPYTPFKKPVSILSLDGGGILTISTLLVLNRLEAELRKEIGSDDIKLIDCFDMVCGTSAGGLISLALLREIDLQDVSNMWPSTIKKVFEGNRNIISGIFFEGYDVNNVKDVFLERMGNKFMSSYKKFYCFVTATDVKHKPYKLFLIRNYTHKYNSINAESYDGINKVPLWLAAWATASAPTYLKGPSAEDIKKLGINIKPEIHLVDGALKASNPALIALEECARLNNKNLSTFIKEDLDTLVSIGTGQVPTKLTQSGASSKSASTFEILINSTHLLTRANDTHREVLQRLADRENTYFRFNVPHIGDIEIDSQDVRDFDLISKATQDYLFDEKFYEIKRLAHKLANNYIRSKYL</sequence>
<keyword id="KW-0963">Cytoplasm</keyword>
<keyword id="KW-0378">Hydrolase</keyword>
<keyword id="KW-0442">Lipid degradation</keyword>
<keyword id="KW-0443">Lipid metabolism</keyword>
<keyword id="KW-1185">Reference proteome</keyword>
<dbReference type="EC" id="3.1.1.4" evidence="3"/>
<dbReference type="EMBL" id="KE123721">
    <property type="protein sequence ID" value="EWC91003.1"/>
    <property type="molecule type" value="Genomic_DNA"/>
</dbReference>
<dbReference type="EMBL" id="NYMT01000009">
    <property type="protein sequence ID" value="PKC46375.1"/>
    <property type="molecule type" value="Genomic_DNA"/>
</dbReference>
<dbReference type="SMR" id="W7K139"/>
<dbReference type="EnsemblProtists" id="EWC91003">
    <property type="protein sequence ID" value="EWC91003"/>
    <property type="gene ID" value="PFNF54_00248"/>
</dbReference>
<dbReference type="VEuPathDB" id="PlasmoDB:PfNF54_020013900"/>
<dbReference type="OMA" id="HNPYKLF"/>
<dbReference type="Proteomes" id="UP000030673">
    <property type="component" value="Unassembled WGS sequence"/>
</dbReference>
<dbReference type="Proteomes" id="UP000232684">
    <property type="component" value="Unassembled WGS sequence"/>
</dbReference>
<dbReference type="GO" id="GO:0005737">
    <property type="term" value="C:cytoplasm"/>
    <property type="evidence" value="ECO:0000314"/>
    <property type="project" value="UniProtKB"/>
</dbReference>
<dbReference type="GO" id="GO:0016020">
    <property type="term" value="C:membrane"/>
    <property type="evidence" value="ECO:0007669"/>
    <property type="project" value="TreeGrafter"/>
</dbReference>
<dbReference type="GO" id="GO:0004623">
    <property type="term" value="F:phospholipase A2 activity"/>
    <property type="evidence" value="ECO:0000314"/>
    <property type="project" value="UniProtKB"/>
</dbReference>
<dbReference type="GO" id="GO:0006631">
    <property type="term" value="P:fatty acid metabolic process"/>
    <property type="evidence" value="ECO:0007669"/>
    <property type="project" value="TreeGrafter"/>
</dbReference>
<dbReference type="GO" id="GO:0007276">
    <property type="term" value="P:gamete generation"/>
    <property type="evidence" value="ECO:0000315"/>
    <property type="project" value="UniProtKB"/>
</dbReference>
<dbReference type="GO" id="GO:0034638">
    <property type="term" value="P:phosphatidylcholine catabolic process"/>
    <property type="evidence" value="ECO:0000314"/>
    <property type="project" value="UniProtKB"/>
</dbReference>
<dbReference type="CDD" id="cd07199">
    <property type="entry name" value="Pat17_PNPLA8_PNPLA9_like"/>
    <property type="match status" value="1"/>
</dbReference>
<dbReference type="FunFam" id="3.40.1090.10:FF:000026">
    <property type="entry name" value="Phospholipase A2"/>
    <property type="match status" value="1"/>
</dbReference>
<dbReference type="Gene3D" id="3.40.1090.10">
    <property type="entry name" value="Cytosolic phospholipase A2 catalytic domain"/>
    <property type="match status" value="1"/>
</dbReference>
<dbReference type="InterPro" id="IPR016035">
    <property type="entry name" value="Acyl_Trfase/lysoPLipase"/>
</dbReference>
<dbReference type="InterPro" id="IPR002641">
    <property type="entry name" value="PNPLA_dom"/>
</dbReference>
<dbReference type="PANTHER" id="PTHR24185">
    <property type="entry name" value="CALCIUM-INDEPENDENT PHOSPHOLIPASE A2-GAMMA"/>
    <property type="match status" value="1"/>
</dbReference>
<dbReference type="PANTHER" id="PTHR24185:SF1">
    <property type="entry name" value="CALCIUM-INDEPENDENT PHOSPHOLIPASE A2-GAMMA"/>
    <property type="match status" value="1"/>
</dbReference>
<dbReference type="Pfam" id="PF01734">
    <property type="entry name" value="Patatin"/>
    <property type="match status" value="1"/>
</dbReference>
<dbReference type="SUPFAM" id="SSF52151">
    <property type="entry name" value="FabD/lysophospholipase-like"/>
    <property type="match status" value="1"/>
</dbReference>
<dbReference type="PROSITE" id="PS51635">
    <property type="entry name" value="PNPLA"/>
    <property type="match status" value="1"/>
</dbReference>
<reference evidence="10" key="1">
    <citation type="submission" date="2013-02" db="EMBL/GenBank/DDBJ databases">
        <title>The Genome Sequence of Plasmodium falciparum NF54.</title>
        <authorList>
            <consortium name="The Broad Institute Genome Sequencing Platform"/>
            <consortium name="The Broad Institute Genome Sequencing Center for Infectious Disease"/>
            <person name="Neafsey D."/>
            <person name="Cheeseman I."/>
            <person name="Volkman S."/>
            <person name="Adams J."/>
            <person name="Walker B."/>
            <person name="Young S.K."/>
            <person name="Zeng Q."/>
            <person name="Gargeya S."/>
            <person name="Fitzgerald M."/>
            <person name="Haas B."/>
            <person name="Abouelleil A."/>
            <person name="Alvarado L."/>
            <person name="Arachchi H.M."/>
            <person name="Berlin A.M."/>
            <person name="Chapman S.B."/>
            <person name="Dewar J."/>
            <person name="Goldberg J."/>
            <person name="Griggs A."/>
            <person name="Gujja S."/>
            <person name="Hansen M."/>
            <person name="Howarth C."/>
            <person name="Imamovic A."/>
            <person name="Larimer J."/>
            <person name="McCowan C."/>
            <person name="Murphy C."/>
            <person name="Neiman D."/>
            <person name="Pearson M."/>
            <person name="Priest M."/>
            <person name="Roberts A."/>
            <person name="Saif S."/>
            <person name="Shea T."/>
            <person name="Sisk P."/>
            <person name="Sykes S."/>
            <person name="Wortman J."/>
            <person name="Nusbaum C."/>
            <person name="Birren B."/>
        </authorList>
    </citation>
    <scope>NUCLEOTIDE SEQUENCE [LARGE SCALE GENOMIC DNA]</scope>
    <source>
        <strain evidence="10">NF54</strain>
    </source>
</reference>
<reference evidence="11" key="2">
    <citation type="submission" date="2017-11" db="EMBL/GenBank/DDBJ databases">
        <title>Plasmodium falciparum NF54 genome assembly.</title>
        <authorList>
            <person name="Bryant J.M."/>
            <person name="Baumgarten S."/>
            <person name="Scheidig-Benatar C."/>
            <person name="Scherf A."/>
        </authorList>
    </citation>
    <scope>NUCLEOTIDE SEQUENCE [LARGE SCALE GENOMIC DNA]</scope>
    <source>
        <strain evidence="9">NF54</strain>
    </source>
</reference>
<reference evidence="7" key="3">
    <citation type="journal article" date="2019" name="Proc. Natl. Acad. Sci. U.S.A.">
        <title>Role of a patatin-like phospholipase in Plasmodium falciparum gametogenesis and malaria transmission.</title>
        <authorList>
            <person name="Singh P."/>
            <person name="Alaganan A."/>
            <person name="More K.R."/>
            <person name="Lorthiois A."/>
            <person name="Thiberge S."/>
            <person name="Gorgette O."/>
            <person name="Guillotte Blisnick M."/>
            <person name="Guglielmini J."/>
            <person name="Aguilera S.S."/>
            <person name="Touqui L."/>
            <person name="Singh S."/>
            <person name="Chitnis C.E."/>
        </authorList>
    </citation>
    <scope>FUNCTION</scope>
    <scope>CATALYTIC ACTIVITY</scope>
    <scope>SUBCELLULAR LOCATION</scope>
    <scope>DEVELOPMENTAL STAGE</scope>
</reference>
<reference evidence="7" key="4">
    <citation type="journal article" date="2020" name="Cell. Microbiol.">
        <title>A patatin-like phospholipase functions during gametocyte induction in the malaria parasite Plasmodium falciparum.</title>
        <authorList>
            <person name="Flammersfeld A."/>
            <person name="Panyot A."/>
            <person name="Yamaryo-Botte Y."/>
            <person name="Aurass P."/>
            <person name="Przyborski J.M."/>
            <person name="Flieger A."/>
            <person name="Botte C."/>
            <person name="Pradel G."/>
        </authorList>
    </citation>
    <scope>FUNCTION</scope>
    <scope>SUBCELLULAR LOCATION</scope>
    <scope>DEVELOPMENTAL STAGE</scope>
    <scope>DISRUPTION PHENOTYPE</scope>
</reference>
<protein>
    <recommendedName>
        <fullName evidence="7">Patatin-like phospholipase 1</fullName>
        <ecNumber evidence="3">3.1.1.4</ecNumber>
    </recommendedName>
    <alternativeName>
        <fullName evidence="5">PfPATPL1</fullName>
    </alternativeName>
</protein>
<feature type="chain" id="PRO_0000453176" description="Patatin-like phospholipase 1">
    <location>
        <begin position="1"/>
        <end position="679"/>
    </location>
</feature>
<feature type="domain" description="PNPLA" evidence="1">
    <location>
        <begin position="338"/>
        <end position="544"/>
    </location>
</feature>
<feature type="region of interest" description="Disordered" evidence="2">
    <location>
        <begin position="19"/>
        <end position="45"/>
    </location>
</feature>
<feature type="region of interest" description="Disordered" evidence="2">
    <location>
        <begin position="155"/>
        <end position="194"/>
    </location>
</feature>
<feature type="short sequence motif" description="GXSXG" evidence="1">
    <location>
        <begin position="381"/>
        <end position="385"/>
    </location>
</feature>
<feature type="short sequence motif" description="DGA/G" evidence="1">
    <location>
        <begin position="531"/>
        <end position="533"/>
    </location>
</feature>
<feature type="compositionally biased region" description="Polar residues" evidence="2">
    <location>
        <begin position="35"/>
        <end position="45"/>
    </location>
</feature>
<feature type="compositionally biased region" description="Polar residues" evidence="2">
    <location>
        <begin position="162"/>
        <end position="176"/>
    </location>
</feature>
<feature type="compositionally biased region" description="Basic and acidic residues" evidence="2">
    <location>
        <begin position="177"/>
        <end position="188"/>
    </location>
</feature>
<feature type="active site" description="Nucleophile" evidence="1">
    <location>
        <position position="383"/>
    </location>
</feature>
<feature type="active site" description="Proton acceptor" evidence="1">
    <location>
        <position position="531"/>
    </location>
</feature>
<name>PLP1_PLAFO</name>
<gene>
    <name evidence="5" type="primary">PATPL1</name>
    <name evidence="6" type="synonym">PNPLA1</name>
    <name evidence="9" type="ORF">CK202_3157</name>
    <name evidence="8" type="ORF">PFNF54_00248</name>
</gene>
<comment type="function">
    <text evidence="3 4">Hydrolyzes the ester bond of the fatty acyl group attached at the sn-2 position of phospholipids such as phosphatidylcholine (PubMed:31413195). Involved in gametogenesis; however, it is not clear whether it is involved in gametocytes development in host erythrocytes or in gametocyte activation in the mosquito midgut (PubMed:31413195, PubMed:31734953). Involved in gametocyte development in host erythrocytes; however, not involved in gametocytes activation including male gamete exflagellation (PubMed:31734953). Involved in the rounding up of gametocytes following activation in the mosquito midgut; however, not required for gametocyte development in host erythrocytes (PubMed:31413195). Required for exflagellation of activated male gametocytes (PubMed:31413195). Involved in gametocytes egress from host erythrocytes by promoting the relocalization of perforin-like protein PLP2-containing vesicles to the periphery of gametocytes; PLP2 secretion is required for permeabilization of the erythrocyte membrane and thus, promotes gametocyte egress (PubMed:31413195). Dispensable for asexual blood stage development (PubMed:31413195).</text>
</comment>
<comment type="catalytic activity">
    <reaction evidence="3">
        <text>a 1,2-diacyl-sn-glycero-3-phosphocholine + H2O = a 1-acyl-sn-glycero-3-phosphocholine + a fatty acid + H(+)</text>
        <dbReference type="Rhea" id="RHEA:15801"/>
        <dbReference type="ChEBI" id="CHEBI:15377"/>
        <dbReference type="ChEBI" id="CHEBI:15378"/>
        <dbReference type="ChEBI" id="CHEBI:28868"/>
        <dbReference type="ChEBI" id="CHEBI:57643"/>
        <dbReference type="ChEBI" id="CHEBI:58168"/>
        <dbReference type="EC" id="3.1.1.4"/>
    </reaction>
</comment>
<comment type="catalytic activity">
    <reaction evidence="3">
        <text>1,2-dihexadecanoyl-sn-glycero-3-phosphocholine + H2O = 1-hexadecanoyl-sn-glycero-3-phosphocholine + hexadecanoate + H(+)</text>
        <dbReference type="Rhea" id="RHEA:41223"/>
        <dbReference type="ChEBI" id="CHEBI:7896"/>
        <dbReference type="ChEBI" id="CHEBI:15377"/>
        <dbReference type="ChEBI" id="CHEBI:15378"/>
        <dbReference type="ChEBI" id="CHEBI:72998"/>
        <dbReference type="ChEBI" id="CHEBI:72999"/>
    </reaction>
</comment>
<comment type="subcellular location">
    <subcellularLocation>
        <location evidence="3 4">Cytoplasm</location>
    </subcellularLocation>
</comment>
<comment type="developmental stage">
    <text evidence="3 4">Expressed during the asexual blood stage, including in rings, trophozoites and schizonts (at protein level) (PubMed:31413195, PubMed:31734953). Expressed in male and female gametocytes from stage II to stage V (at protein level) (PubMed:31413195, PubMed:31734953).</text>
</comment>
<comment type="disruption phenotype">
    <text evidence="4">Gametocyte maturation is delayed (PubMed:31734953). No defect in exflagellation of male gametes, formation of macrogametes and zygotes following gametocyte activation (PubMed:31734953). At the ring stage, levels of phosphatidylcholine are increased (PubMed:31734953). Dispensable for asexual blood stage growth (PubMed:31734953).</text>
</comment>
<comment type="similarity">
    <text evidence="7">Belongs to the patatin family.</text>
</comment>
<accession>W7K139</accession>
<evidence type="ECO:0000255" key="1">
    <source>
        <dbReference type="PROSITE-ProRule" id="PRU01161"/>
    </source>
</evidence>
<evidence type="ECO:0000256" key="2">
    <source>
        <dbReference type="SAM" id="MobiDB-lite"/>
    </source>
</evidence>
<evidence type="ECO:0000269" key="3">
    <source>
    </source>
</evidence>
<evidence type="ECO:0000269" key="4">
    <source>
    </source>
</evidence>
<evidence type="ECO:0000303" key="5">
    <source>
    </source>
</evidence>
<evidence type="ECO:0000303" key="6">
    <source>
    </source>
</evidence>
<evidence type="ECO:0000305" key="7"/>
<evidence type="ECO:0000312" key="8">
    <source>
        <dbReference type="EMBL" id="EWC91003.1"/>
    </source>
</evidence>
<evidence type="ECO:0000312" key="9">
    <source>
        <dbReference type="EMBL" id="PKC46375.1"/>
    </source>
</evidence>
<evidence type="ECO:0000312" key="10">
    <source>
        <dbReference type="Proteomes" id="UP000030673"/>
    </source>
</evidence>
<evidence type="ECO:0000312" key="11">
    <source>
        <dbReference type="Proteomes" id="UP000232684"/>
    </source>
</evidence>